<comment type="function">
    <text evidence="1">Converts heme B (protoheme IX) to heme O by substitution of the vinyl group on carbon 2 of heme B porphyrin ring with a hydroxyethyl farnesyl side group.</text>
</comment>
<comment type="catalytic activity">
    <reaction evidence="1">
        <text>heme b + (2E,6E)-farnesyl diphosphate + H2O = Fe(II)-heme o + diphosphate</text>
        <dbReference type="Rhea" id="RHEA:28070"/>
        <dbReference type="ChEBI" id="CHEBI:15377"/>
        <dbReference type="ChEBI" id="CHEBI:33019"/>
        <dbReference type="ChEBI" id="CHEBI:60344"/>
        <dbReference type="ChEBI" id="CHEBI:60530"/>
        <dbReference type="ChEBI" id="CHEBI:175763"/>
        <dbReference type="EC" id="2.5.1.141"/>
    </reaction>
</comment>
<comment type="pathway">
    <text evidence="1">Porphyrin-containing compound metabolism; heme O biosynthesis; heme O from protoheme: step 1/1.</text>
</comment>
<comment type="subcellular location">
    <subcellularLocation>
        <location evidence="1">Cell inner membrane</location>
        <topology evidence="1">Multi-pass membrane protein</topology>
    </subcellularLocation>
</comment>
<comment type="miscellaneous">
    <text evidence="1">Carbon 2 of the heme B porphyrin ring is defined according to the Fischer nomenclature.</text>
</comment>
<comment type="similarity">
    <text evidence="1">Belongs to the UbiA prenyltransferase family. Protoheme IX farnesyltransferase subfamily.</text>
</comment>
<dbReference type="EC" id="2.5.1.141" evidence="1"/>
<dbReference type="EMBL" id="AM398681">
    <property type="protein sequence ID" value="CAL44168.1"/>
    <property type="molecule type" value="Genomic_DNA"/>
</dbReference>
<dbReference type="RefSeq" id="YP_001296970.1">
    <property type="nucleotide sequence ID" value="NC_009613.3"/>
</dbReference>
<dbReference type="SMR" id="A6H1E4"/>
<dbReference type="STRING" id="402612.FP2106"/>
<dbReference type="EnsemblBacteria" id="CAL44168">
    <property type="protein sequence ID" value="CAL44168"/>
    <property type="gene ID" value="FP2106"/>
</dbReference>
<dbReference type="KEGG" id="fps:FP2106"/>
<dbReference type="PATRIC" id="fig|402612.5.peg.2133"/>
<dbReference type="eggNOG" id="COG0109">
    <property type="taxonomic scope" value="Bacteria"/>
</dbReference>
<dbReference type="HOGENOM" id="CLU_029631_3_2_10"/>
<dbReference type="OrthoDB" id="9814417at2"/>
<dbReference type="UniPathway" id="UPA00834">
    <property type="reaction ID" value="UER00712"/>
</dbReference>
<dbReference type="Proteomes" id="UP000006394">
    <property type="component" value="Chromosome"/>
</dbReference>
<dbReference type="GO" id="GO:0005886">
    <property type="term" value="C:plasma membrane"/>
    <property type="evidence" value="ECO:0007669"/>
    <property type="project" value="UniProtKB-SubCell"/>
</dbReference>
<dbReference type="GO" id="GO:0008495">
    <property type="term" value="F:protoheme IX farnesyltransferase activity"/>
    <property type="evidence" value="ECO:0007669"/>
    <property type="project" value="UniProtKB-UniRule"/>
</dbReference>
<dbReference type="GO" id="GO:0006784">
    <property type="term" value="P:heme A biosynthetic process"/>
    <property type="evidence" value="ECO:0007669"/>
    <property type="project" value="TreeGrafter"/>
</dbReference>
<dbReference type="GO" id="GO:0048034">
    <property type="term" value="P:heme O biosynthetic process"/>
    <property type="evidence" value="ECO:0007669"/>
    <property type="project" value="UniProtKB-UniRule"/>
</dbReference>
<dbReference type="CDD" id="cd13957">
    <property type="entry name" value="PT_UbiA_Cox10"/>
    <property type="match status" value="1"/>
</dbReference>
<dbReference type="Gene3D" id="1.10.357.140">
    <property type="entry name" value="UbiA prenyltransferase"/>
    <property type="match status" value="1"/>
</dbReference>
<dbReference type="HAMAP" id="MF_00154">
    <property type="entry name" value="CyoE_CtaB"/>
    <property type="match status" value="1"/>
</dbReference>
<dbReference type="InterPro" id="IPR006369">
    <property type="entry name" value="Protohaem_IX_farnesylTrfase"/>
</dbReference>
<dbReference type="InterPro" id="IPR000537">
    <property type="entry name" value="UbiA_prenyltransferase"/>
</dbReference>
<dbReference type="InterPro" id="IPR030470">
    <property type="entry name" value="UbiA_prenylTrfase_CS"/>
</dbReference>
<dbReference type="InterPro" id="IPR044878">
    <property type="entry name" value="UbiA_sf"/>
</dbReference>
<dbReference type="NCBIfam" id="TIGR01473">
    <property type="entry name" value="cyoE_ctaB"/>
    <property type="match status" value="1"/>
</dbReference>
<dbReference type="PANTHER" id="PTHR43448">
    <property type="entry name" value="PROTOHEME IX FARNESYLTRANSFERASE, MITOCHONDRIAL"/>
    <property type="match status" value="1"/>
</dbReference>
<dbReference type="PANTHER" id="PTHR43448:SF2">
    <property type="entry name" value="PROTOHEME IX FARNESYLTRANSFERASE, MITOCHONDRIAL"/>
    <property type="match status" value="1"/>
</dbReference>
<dbReference type="Pfam" id="PF01040">
    <property type="entry name" value="UbiA"/>
    <property type="match status" value="1"/>
</dbReference>
<dbReference type="PROSITE" id="PS00943">
    <property type="entry name" value="UBIA"/>
    <property type="match status" value="1"/>
</dbReference>
<keyword id="KW-0997">Cell inner membrane</keyword>
<keyword id="KW-1003">Cell membrane</keyword>
<keyword id="KW-0350">Heme biosynthesis</keyword>
<keyword id="KW-0472">Membrane</keyword>
<keyword id="KW-1185">Reference proteome</keyword>
<keyword id="KW-0808">Transferase</keyword>
<keyword id="KW-0812">Transmembrane</keyword>
<keyword id="KW-1133">Transmembrane helix</keyword>
<protein>
    <recommendedName>
        <fullName evidence="1">Protoheme IX farnesyltransferase</fullName>
        <ecNumber evidence="1">2.5.1.141</ecNumber>
    </recommendedName>
    <alternativeName>
        <fullName evidence="1">Heme B farnesyltransferase</fullName>
    </alternativeName>
    <alternativeName>
        <fullName evidence="1">Heme O synthase</fullName>
    </alternativeName>
</protein>
<gene>
    <name evidence="1" type="primary">ctaB</name>
    <name type="ordered locus">FP2106</name>
</gene>
<sequence length="300" mass="33413">MSAINTLPPIKSIFNDFKEITKAGLAISVVFSSLAGYLLGIHEFNLETIYVLLMLAIGGYCMVGASNAYNQIIEKDLDTLMNRTKNRPIPSGRMSVNTAFTIATILTITGLTILYMINPKTAMFGAISIFLYTCVYTPLKTVTSLSVFVGAFPGAIPFMLGWVAATNDFGIEAGTLFLIQFFWQFPHFWAIGWFLFEDYKKGGFYMLPTGKRDKGTAMQIVLYTLWLTAASILPSFGYTGRLYLTPVSAIIVVLLGLWMLVYAIKLYKNKTDKSAKTLMLVSVAYISLIQVVYILDKFLR</sequence>
<accession>A6H1E4</accession>
<feature type="chain" id="PRO_0000327053" description="Protoheme IX farnesyltransferase">
    <location>
        <begin position="1"/>
        <end position="300"/>
    </location>
</feature>
<feature type="transmembrane region" description="Helical" evidence="1">
    <location>
        <begin position="24"/>
        <end position="44"/>
    </location>
</feature>
<feature type="transmembrane region" description="Helical" evidence="1">
    <location>
        <begin position="46"/>
        <end position="66"/>
    </location>
</feature>
<feature type="transmembrane region" description="Helical" evidence="1">
    <location>
        <begin position="99"/>
        <end position="119"/>
    </location>
</feature>
<feature type="transmembrane region" description="Helical" evidence="1">
    <location>
        <begin position="122"/>
        <end position="142"/>
    </location>
</feature>
<feature type="transmembrane region" description="Helical" evidence="1">
    <location>
        <begin position="145"/>
        <end position="165"/>
    </location>
</feature>
<feature type="transmembrane region" description="Helical" evidence="1">
    <location>
        <begin position="176"/>
        <end position="196"/>
    </location>
</feature>
<feature type="transmembrane region" description="Helical" evidence="1">
    <location>
        <begin position="220"/>
        <end position="240"/>
    </location>
</feature>
<feature type="transmembrane region" description="Helical" evidence="1">
    <location>
        <begin position="244"/>
        <end position="264"/>
    </location>
</feature>
<feature type="transmembrane region" description="Helical" evidence="1">
    <location>
        <begin position="275"/>
        <end position="295"/>
    </location>
</feature>
<name>COXX_FLAPJ</name>
<reference key="1">
    <citation type="journal article" date="2007" name="Nat. Biotechnol.">
        <title>Complete genome sequence of the fish pathogen Flavobacterium psychrophilum.</title>
        <authorList>
            <person name="Duchaud E."/>
            <person name="Boussaha M."/>
            <person name="Loux V."/>
            <person name="Bernardet J.-F."/>
            <person name="Michel C."/>
            <person name="Kerouault B."/>
            <person name="Mondot S."/>
            <person name="Nicolas P."/>
            <person name="Bossy R."/>
            <person name="Caron C."/>
            <person name="Bessieres P."/>
            <person name="Gibrat J.-F."/>
            <person name="Claverol S."/>
            <person name="Dumetz F."/>
            <person name="Le Henaff M."/>
            <person name="Benmansour A."/>
        </authorList>
    </citation>
    <scope>NUCLEOTIDE SEQUENCE [LARGE SCALE GENOMIC DNA]</scope>
    <source>
        <strain>ATCC 49511 / DSM 21280 / CIP 103535 / JIP02/86</strain>
    </source>
</reference>
<organism>
    <name type="scientific">Flavobacterium psychrophilum (strain ATCC 49511 / DSM 21280 / CIP 103535 / JIP02/86)</name>
    <dbReference type="NCBI Taxonomy" id="402612"/>
    <lineage>
        <taxon>Bacteria</taxon>
        <taxon>Pseudomonadati</taxon>
        <taxon>Bacteroidota</taxon>
        <taxon>Flavobacteriia</taxon>
        <taxon>Flavobacteriales</taxon>
        <taxon>Flavobacteriaceae</taxon>
        <taxon>Flavobacterium</taxon>
    </lineage>
</organism>
<evidence type="ECO:0000255" key="1">
    <source>
        <dbReference type="HAMAP-Rule" id="MF_00154"/>
    </source>
</evidence>
<proteinExistence type="inferred from homology"/>